<sequence length="215" mass="23758">MENLAWSPFKSLTAEQREQIDRFREQLLRFNQRVNLISPETEDTFRTRHLLHCLTLTARDFPAGCTVVDWGTGGGLPAIPLAICHPEATVVGVDSVGKKSRAVRTIARRLGLDNCFTWNGRADEWTGEAHYSVSRATAPLADLWAWHRRVAVSPDDPNGDAWPPGLLALKGGDLSDEVAALHAADPDARVERHSLNDLLGRNGFFGEKEIVAVRS</sequence>
<dbReference type="EC" id="2.1.1.-" evidence="1"/>
<dbReference type="EMBL" id="CP000159">
    <property type="protein sequence ID" value="ABC44826.1"/>
    <property type="molecule type" value="Genomic_DNA"/>
</dbReference>
<dbReference type="RefSeq" id="WP_011402847.1">
    <property type="nucleotide sequence ID" value="NC_007677.1"/>
</dbReference>
<dbReference type="RefSeq" id="YP_444214.1">
    <property type="nucleotide sequence ID" value="NC_007677.1"/>
</dbReference>
<dbReference type="SMR" id="Q2S6G7"/>
<dbReference type="STRING" id="309807.SRU_0061"/>
<dbReference type="EnsemblBacteria" id="ABC44826">
    <property type="protein sequence ID" value="ABC44826"/>
    <property type="gene ID" value="SRU_0061"/>
</dbReference>
<dbReference type="KEGG" id="sru:SRU_0061"/>
<dbReference type="eggNOG" id="COG0357">
    <property type="taxonomic scope" value="Bacteria"/>
</dbReference>
<dbReference type="HOGENOM" id="CLU_065341_2_2_10"/>
<dbReference type="OrthoDB" id="9808773at2"/>
<dbReference type="Proteomes" id="UP000008674">
    <property type="component" value="Chromosome"/>
</dbReference>
<dbReference type="GO" id="GO:0005829">
    <property type="term" value="C:cytosol"/>
    <property type="evidence" value="ECO:0007669"/>
    <property type="project" value="TreeGrafter"/>
</dbReference>
<dbReference type="GO" id="GO:0070043">
    <property type="term" value="F:rRNA (guanine-N7-)-methyltransferase activity"/>
    <property type="evidence" value="ECO:0007669"/>
    <property type="project" value="UniProtKB-UniRule"/>
</dbReference>
<dbReference type="Gene3D" id="3.40.50.150">
    <property type="entry name" value="Vaccinia Virus protein VP39"/>
    <property type="match status" value="1"/>
</dbReference>
<dbReference type="HAMAP" id="MF_00074">
    <property type="entry name" value="16SrRNA_methyltr_G"/>
    <property type="match status" value="1"/>
</dbReference>
<dbReference type="InterPro" id="IPR003682">
    <property type="entry name" value="rRNA_ssu_MeTfrase_G"/>
</dbReference>
<dbReference type="InterPro" id="IPR029063">
    <property type="entry name" value="SAM-dependent_MTases_sf"/>
</dbReference>
<dbReference type="PANTHER" id="PTHR31760">
    <property type="entry name" value="S-ADENOSYL-L-METHIONINE-DEPENDENT METHYLTRANSFERASES SUPERFAMILY PROTEIN"/>
    <property type="match status" value="1"/>
</dbReference>
<dbReference type="PANTHER" id="PTHR31760:SF0">
    <property type="entry name" value="S-ADENOSYL-L-METHIONINE-DEPENDENT METHYLTRANSFERASES SUPERFAMILY PROTEIN"/>
    <property type="match status" value="1"/>
</dbReference>
<dbReference type="Pfam" id="PF02527">
    <property type="entry name" value="GidB"/>
    <property type="match status" value="1"/>
</dbReference>
<dbReference type="PIRSF" id="PIRSF003078">
    <property type="entry name" value="GidB"/>
    <property type="match status" value="1"/>
</dbReference>
<dbReference type="SUPFAM" id="SSF53335">
    <property type="entry name" value="S-adenosyl-L-methionine-dependent methyltransferases"/>
    <property type="match status" value="1"/>
</dbReference>
<gene>
    <name evidence="1" type="primary">rsmG</name>
    <name type="ordered locus">SRU_0061</name>
</gene>
<name>RSMG_SALRD</name>
<reference key="1">
    <citation type="journal article" date="2005" name="Proc. Natl. Acad. Sci. U.S.A.">
        <title>The genome of Salinibacter ruber: convergence and gene exchange among hyperhalophilic bacteria and archaea.</title>
        <authorList>
            <person name="Mongodin E.F."/>
            <person name="Nelson K.E."/>
            <person name="Daugherty S."/>
            <person name="DeBoy R.T."/>
            <person name="Wister J."/>
            <person name="Khouri H."/>
            <person name="Weidman J."/>
            <person name="Walsh D.A."/>
            <person name="Papke R.T."/>
            <person name="Sanchez Perez G."/>
            <person name="Sharma A.K."/>
            <person name="Nesbo C.L."/>
            <person name="MacLeod D."/>
            <person name="Bapteste E."/>
            <person name="Doolittle W.F."/>
            <person name="Charlebois R.L."/>
            <person name="Legault B."/>
            <person name="Rodriguez-Valera F."/>
        </authorList>
    </citation>
    <scope>NUCLEOTIDE SEQUENCE [LARGE SCALE GENOMIC DNA]</scope>
    <source>
        <strain>DSM 13855 / CECT 5946 / M31</strain>
    </source>
</reference>
<proteinExistence type="inferred from homology"/>
<organism>
    <name type="scientific">Salinibacter ruber (strain DSM 13855 / M31)</name>
    <dbReference type="NCBI Taxonomy" id="309807"/>
    <lineage>
        <taxon>Bacteria</taxon>
        <taxon>Pseudomonadati</taxon>
        <taxon>Rhodothermota</taxon>
        <taxon>Rhodothermia</taxon>
        <taxon>Rhodothermales</taxon>
        <taxon>Salinibacteraceae</taxon>
        <taxon>Salinibacter</taxon>
    </lineage>
</organism>
<accession>Q2S6G7</accession>
<keyword id="KW-0963">Cytoplasm</keyword>
<keyword id="KW-0489">Methyltransferase</keyword>
<keyword id="KW-1185">Reference proteome</keyword>
<keyword id="KW-0698">rRNA processing</keyword>
<keyword id="KW-0949">S-adenosyl-L-methionine</keyword>
<keyword id="KW-0808">Transferase</keyword>
<protein>
    <recommendedName>
        <fullName evidence="1">Ribosomal RNA small subunit methyltransferase G</fullName>
        <ecNumber evidence="1">2.1.1.-</ecNumber>
    </recommendedName>
    <alternativeName>
        <fullName evidence="1">16S rRNA 7-methylguanosine methyltransferase</fullName>
        <shortName evidence="1">16S rRNA m7G methyltransferase</shortName>
    </alternativeName>
</protein>
<evidence type="ECO:0000255" key="1">
    <source>
        <dbReference type="HAMAP-Rule" id="MF_00074"/>
    </source>
</evidence>
<comment type="function">
    <text evidence="1">Specifically methylates the N7 position of a guanine in 16S rRNA.</text>
</comment>
<comment type="subcellular location">
    <subcellularLocation>
        <location evidence="1">Cytoplasm</location>
    </subcellularLocation>
</comment>
<comment type="similarity">
    <text evidence="1">Belongs to the methyltransferase superfamily. RNA methyltransferase RsmG family.</text>
</comment>
<feature type="chain" id="PRO_0000342936" description="Ribosomal RNA small subunit methyltransferase G">
    <location>
        <begin position="1"/>
        <end position="215"/>
    </location>
</feature>
<feature type="binding site" evidence="1">
    <location>
        <position position="71"/>
    </location>
    <ligand>
        <name>S-adenosyl-L-methionine</name>
        <dbReference type="ChEBI" id="CHEBI:59789"/>
    </ligand>
</feature>
<feature type="binding site" evidence="1">
    <location>
        <position position="76"/>
    </location>
    <ligand>
        <name>S-adenosyl-L-methionine</name>
        <dbReference type="ChEBI" id="CHEBI:59789"/>
    </ligand>
</feature>
<feature type="binding site" evidence="1">
    <location>
        <position position="135"/>
    </location>
    <ligand>
        <name>S-adenosyl-L-methionine</name>
        <dbReference type="ChEBI" id="CHEBI:59789"/>
    </ligand>
</feature>